<accession>Q72D73</accession>
<reference key="1">
    <citation type="journal article" date="2004" name="Nat. Biotechnol.">
        <title>The genome sequence of the anaerobic, sulfate-reducing bacterium Desulfovibrio vulgaris Hildenborough.</title>
        <authorList>
            <person name="Heidelberg J.F."/>
            <person name="Seshadri R."/>
            <person name="Haveman S.A."/>
            <person name="Hemme C.L."/>
            <person name="Paulsen I.T."/>
            <person name="Kolonay J.F."/>
            <person name="Eisen J.A."/>
            <person name="Ward N.L."/>
            <person name="Methe B.A."/>
            <person name="Brinkac L.M."/>
            <person name="Daugherty S.C."/>
            <person name="DeBoy R.T."/>
            <person name="Dodson R.J."/>
            <person name="Durkin A.S."/>
            <person name="Madupu R."/>
            <person name="Nelson W.C."/>
            <person name="Sullivan S.A."/>
            <person name="Fouts D.E."/>
            <person name="Haft D.H."/>
            <person name="Selengut J."/>
            <person name="Peterson J.D."/>
            <person name="Davidsen T.M."/>
            <person name="Zafar N."/>
            <person name="Zhou L."/>
            <person name="Radune D."/>
            <person name="Dimitrov G."/>
            <person name="Hance M."/>
            <person name="Tran K."/>
            <person name="Khouri H.M."/>
            <person name="Gill J."/>
            <person name="Utterback T.R."/>
            <person name="Feldblyum T.V."/>
            <person name="Wall J.D."/>
            <person name="Voordouw G."/>
            <person name="Fraser C.M."/>
        </authorList>
    </citation>
    <scope>NUCLEOTIDE SEQUENCE [LARGE SCALE GENOMIC DNA]</scope>
    <source>
        <strain>ATCC 29579 / DSM 644 / CCUG 34227 / NCIMB 8303 / VKM B-1760 / Hildenborough</strain>
    </source>
</reference>
<protein>
    <recommendedName>
        <fullName>Putative ABC transporter ATP-binding protein DVU_1056</fullName>
        <ecNumber>7.-.-.-</ecNumber>
    </recommendedName>
</protein>
<keyword id="KW-0067">ATP-binding</keyword>
<keyword id="KW-0997">Cell inner membrane</keyword>
<keyword id="KW-1003">Cell membrane</keyword>
<keyword id="KW-0472">Membrane</keyword>
<keyword id="KW-0547">Nucleotide-binding</keyword>
<keyword id="KW-1185">Reference proteome</keyword>
<keyword id="KW-1278">Translocase</keyword>
<keyword id="KW-0813">Transport</keyword>
<feature type="chain" id="PRO_0000092006" description="Putative ABC transporter ATP-binding protein DVU_1056">
    <location>
        <begin position="1"/>
        <end position="273"/>
    </location>
</feature>
<feature type="domain" description="ABC transporter" evidence="2">
    <location>
        <begin position="10"/>
        <end position="242"/>
    </location>
</feature>
<feature type="region of interest" description="Disordered" evidence="3">
    <location>
        <begin position="234"/>
        <end position="273"/>
    </location>
</feature>
<feature type="compositionally biased region" description="Basic and acidic residues" evidence="3">
    <location>
        <begin position="235"/>
        <end position="267"/>
    </location>
</feature>
<feature type="binding site" evidence="2">
    <location>
        <begin position="44"/>
        <end position="51"/>
    </location>
    <ligand>
        <name>ATP</name>
        <dbReference type="ChEBI" id="CHEBI:30616"/>
    </ligand>
</feature>
<name>Y1056_NITV2</name>
<gene>
    <name type="ordered locus">DVU_1056</name>
</gene>
<comment type="function">
    <text evidence="1">Probably part of an ABC transporter complex. Responsible for energy coupling to the transport system (By similarity).</text>
</comment>
<comment type="subcellular location">
    <subcellularLocation>
        <location evidence="1">Cell inner membrane</location>
        <topology evidence="1">Peripheral membrane protein</topology>
    </subcellularLocation>
</comment>
<comment type="similarity">
    <text evidence="4">Belongs to the ABC transporter superfamily.</text>
</comment>
<proteinExistence type="inferred from homology"/>
<dbReference type="EC" id="7.-.-.-"/>
<dbReference type="EMBL" id="AE017285">
    <property type="protein sequence ID" value="AAS95536.1"/>
    <property type="molecule type" value="Genomic_DNA"/>
</dbReference>
<dbReference type="RefSeq" id="WP_010938355.1">
    <property type="nucleotide sequence ID" value="NC_002937.3"/>
</dbReference>
<dbReference type="RefSeq" id="YP_010277.1">
    <property type="nucleotide sequence ID" value="NC_002937.3"/>
</dbReference>
<dbReference type="SMR" id="Q72D73"/>
<dbReference type="STRING" id="882.DVU_1056"/>
<dbReference type="PaxDb" id="882-DVU_1056"/>
<dbReference type="EnsemblBacteria" id="AAS95536">
    <property type="protein sequence ID" value="AAS95536"/>
    <property type="gene ID" value="DVU_1056"/>
</dbReference>
<dbReference type="KEGG" id="dvu:DVU_1056"/>
<dbReference type="PATRIC" id="fig|882.5.peg.993"/>
<dbReference type="eggNOG" id="COG1122">
    <property type="taxonomic scope" value="Bacteria"/>
</dbReference>
<dbReference type="HOGENOM" id="CLU_000604_1_22_7"/>
<dbReference type="OrthoDB" id="9809450at2"/>
<dbReference type="PhylomeDB" id="Q72D73"/>
<dbReference type="Proteomes" id="UP000002194">
    <property type="component" value="Chromosome"/>
</dbReference>
<dbReference type="GO" id="GO:0043190">
    <property type="term" value="C:ATP-binding cassette (ABC) transporter complex"/>
    <property type="evidence" value="ECO:0007669"/>
    <property type="project" value="TreeGrafter"/>
</dbReference>
<dbReference type="GO" id="GO:0005524">
    <property type="term" value="F:ATP binding"/>
    <property type="evidence" value="ECO:0007669"/>
    <property type="project" value="UniProtKB-KW"/>
</dbReference>
<dbReference type="GO" id="GO:0016887">
    <property type="term" value="F:ATP hydrolysis activity"/>
    <property type="evidence" value="ECO:0007669"/>
    <property type="project" value="InterPro"/>
</dbReference>
<dbReference type="GO" id="GO:0042626">
    <property type="term" value="F:ATPase-coupled transmembrane transporter activity"/>
    <property type="evidence" value="ECO:0007669"/>
    <property type="project" value="TreeGrafter"/>
</dbReference>
<dbReference type="CDD" id="cd03225">
    <property type="entry name" value="ABC_cobalt_CbiO_domain1"/>
    <property type="match status" value="1"/>
</dbReference>
<dbReference type="Gene3D" id="3.40.50.300">
    <property type="entry name" value="P-loop containing nucleotide triphosphate hydrolases"/>
    <property type="match status" value="1"/>
</dbReference>
<dbReference type="InterPro" id="IPR003593">
    <property type="entry name" value="AAA+_ATPase"/>
</dbReference>
<dbReference type="InterPro" id="IPR003439">
    <property type="entry name" value="ABC_transporter-like_ATP-bd"/>
</dbReference>
<dbReference type="InterPro" id="IPR017871">
    <property type="entry name" value="ABC_transporter-like_CS"/>
</dbReference>
<dbReference type="InterPro" id="IPR015856">
    <property type="entry name" value="ABC_transpr_CbiO/EcfA_su"/>
</dbReference>
<dbReference type="InterPro" id="IPR050095">
    <property type="entry name" value="ECF_ABC_transporter_ATP-bd"/>
</dbReference>
<dbReference type="InterPro" id="IPR027417">
    <property type="entry name" value="P-loop_NTPase"/>
</dbReference>
<dbReference type="PANTHER" id="PTHR43553:SF24">
    <property type="entry name" value="ENERGY-COUPLING FACTOR TRANSPORTER ATP-BINDING PROTEIN ECFA1"/>
    <property type="match status" value="1"/>
</dbReference>
<dbReference type="PANTHER" id="PTHR43553">
    <property type="entry name" value="HEAVY METAL TRANSPORTER"/>
    <property type="match status" value="1"/>
</dbReference>
<dbReference type="Pfam" id="PF00005">
    <property type="entry name" value="ABC_tran"/>
    <property type="match status" value="1"/>
</dbReference>
<dbReference type="SMART" id="SM00382">
    <property type="entry name" value="AAA"/>
    <property type="match status" value="1"/>
</dbReference>
<dbReference type="SUPFAM" id="SSF52540">
    <property type="entry name" value="P-loop containing nucleoside triphosphate hydrolases"/>
    <property type="match status" value="1"/>
</dbReference>
<dbReference type="PROSITE" id="PS00211">
    <property type="entry name" value="ABC_TRANSPORTER_1"/>
    <property type="match status" value="1"/>
</dbReference>
<dbReference type="PROSITE" id="PS50893">
    <property type="entry name" value="ABC_TRANSPORTER_2"/>
    <property type="match status" value="1"/>
</dbReference>
<sequence>MTDTTGNPLLSLDDIHFTYPGTTAPVLRGATLHLAQGDRLGLLGHNGSGKTTLLHIAMGLLRPESGTVHHRNAVAHDEASLAALRRDIGFLFQNADDQLFCPTVLEDVAFGPLNLGLSPEQARERATQTLQGLGLEGFGARVTHRLSGGEKKMVALASVLSMQPTALLLDEPTNDLDPATRQRLIDVLNRMSATHIIISHDWDFLARTCTTFLTVDDGIVCTSRHTPHVHTHIHHGGEVAHEHPSRGCCHQHDGSHHHAGHDDDHPHTSQTTE</sequence>
<evidence type="ECO:0000250" key="1"/>
<evidence type="ECO:0000255" key="2">
    <source>
        <dbReference type="PROSITE-ProRule" id="PRU00434"/>
    </source>
</evidence>
<evidence type="ECO:0000256" key="3">
    <source>
        <dbReference type="SAM" id="MobiDB-lite"/>
    </source>
</evidence>
<evidence type="ECO:0000305" key="4"/>
<organism>
    <name type="scientific">Nitratidesulfovibrio vulgaris (strain ATCC 29579 / DSM 644 / CCUG 34227 / NCIMB 8303 / VKM B-1760 / Hildenborough)</name>
    <name type="common">Desulfovibrio vulgaris</name>
    <dbReference type="NCBI Taxonomy" id="882"/>
    <lineage>
        <taxon>Bacteria</taxon>
        <taxon>Pseudomonadati</taxon>
        <taxon>Thermodesulfobacteriota</taxon>
        <taxon>Desulfovibrionia</taxon>
        <taxon>Desulfovibrionales</taxon>
        <taxon>Desulfovibrionaceae</taxon>
        <taxon>Nitratidesulfovibrio</taxon>
    </lineage>
</organism>